<keyword id="KW-0479">Metal-binding</keyword>
<keyword id="KW-0520">NAD</keyword>
<keyword id="KW-0560">Oxidoreductase</keyword>
<keyword id="KW-0862">Zinc</keyword>
<gene>
    <name type="primary">CAD1</name>
</gene>
<dbReference type="EC" id="1.1.1.255"/>
<dbReference type="EMBL" id="AF083333">
    <property type="protein sequence ID" value="AAC35846.1"/>
    <property type="molecule type" value="mRNA"/>
</dbReference>
<dbReference type="SMR" id="O82515"/>
<dbReference type="GO" id="GO:0046029">
    <property type="term" value="F:mannitol dehydrogenase activity"/>
    <property type="evidence" value="ECO:0007669"/>
    <property type="project" value="UniProtKB-EC"/>
</dbReference>
<dbReference type="GO" id="GO:0008270">
    <property type="term" value="F:zinc ion binding"/>
    <property type="evidence" value="ECO:0007669"/>
    <property type="project" value="InterPro"/>
</dbReference>
<dbReference type="GO" id="GO:0009809">
    <property type="term" value="P:lignin biosynthetic process"/>
    <property type="evidence" value="ECO:0007669"/>
    <property type="project" value="UniProtKB-ARBA"/>
</dbReference>
<dbReference type="CDD" id="cd05283">
    <property type="entry name" value="CAD1"/>
    <property type="match status" value="1"/>
</dbReference>
<dbReference type="FunFam" id="3.40.50.720:FF:000022">
    <property type="entry name" value="Cinnamyl alcohol dehydrogenase"/>
    <property type="match status" value="1"/>
</dbReference>
<dbReference type="FunFam" id="3.90.180.10:FF:000004">
    <property type="entry name" value="probable cinnamyl alcohol dehydrogenase"/>
    <property type="match status" value="1"/>
</dbReference>
<dbReference type="Gene3D" id="3.90.180.10">
    <property type="entry name" value="Medium-chain alcohol dehydrogenases, catalytic domain"/>
    <property type="match status" value="1"/>
</dbReference>
<dbReference type="Gene3D" id="3.40.50.720">
    <property type="entry name" value="NAD(P)-binding Rossmann-like Domain"/>
    <property type="match status" value="1"/>
</dbReference>
<dbReference type="InterPro" id="IPR013149">
    <property type="entry name" value="ADH-like_C"/>
</dbReference>
<dbReference type="InterPro" id="IPR013154">
    <property type="entry name" value="ADH-like_N"/>
</dbReference>
<dbReference type="InterPro" id="IPR002328">
    <property type="entry name" value="ADH_Zn_CS"/>
</dbReference>
<dbReference type="InterPro" id="IPR047109">
    <property type="entry name" value="CAD-like"/>
</dbReference>
<dbReference type="InterPro" id="IPR011032">
    <property type="entry name" value="GroES-like_sf"/>
</dbReference>
<dbReference type="InterPro" id="IPR036291">
    <property type="entry name" value="NAD(P)-bd_dom_sf"/>
</dbReference>
<dbReference type="InterPro" id="IPR020843">
    <property type="entry name" value="PKS_ER"/>
</dbReference>
<dbReference type="PANTHER" id="PTHR42683">
    <property type="entry name" value="ALDEHYDE REDUCTASE"/>
    <property type="match status" value="1"/>
</dbReference>
<dbReference type="Pfam" id="PF08240">
    <property type="entry name" value="ADH_N"/>
    <property type="match status" value="1"/>
</dbReference>
<dbReference type="Pfam" id="PF00107">
    <property type="entry name" value="ADH_zinc_N"/>
    <property type="match status" value="1"/>
</dbReference>
<dbReference type="SMART" id="SM00829">
    <property type="entry name" value="PKS_ER"/>
    <property type="match status" value="1"/>
</dbReference>
<dbReference type="SUPFAM" id="SSF50129">
    <property type="entry name" value="GroES-like"/>
    <property type="match status" value="1"/>
</dbReference>
<dbReference type="SUPFAM" id="SSF51735">
    <property type="entry name" value="NAD(P)-binding Rossmann-fold domains"/>
    <property type="match status" value="1"/>
</dbReference>
<dbReference type="PROSITE" id="PS00059">
    <property type="entry name" value="ADH_ZINC"/>
    <property type="match status" value="1"/>
</dbReference>
<evidence type="ECO:0000250" key="1"/>
<evidence type="ECO:0000305" key="2"/>
<comment type="function">
    <text evidence="1">Oxidizes mannitol to mannose. Provides the initial step by which translocated mannitol is committed to central metabolism and, by regulating mannitol pool size, is important in regulating salt tolerance at the cellular level (By similarity).</text>
</comment>
<comment type="catalytic activity">
    <reaction>
        <text>D-mannitol + NAD(+) = D-mannose + NADH + H(+)</text>
        <dbReference type="Rhea" id="RHEA:15029"/>
        <dbReference type="ChEBI" id="CHEBI:4208"/>
        <dbReference type="ChEBI" id="CHEBI:15378"/>
        <dbReference type="ChEBI" id="CHEBI:16899"/>
        <dbReference type="ChEBI" id="CHEBI:57540"/>
        <dbReference type="ChEBI" id="CHEBI:57945"/>
        <dbReference type="EC" id="1.1.1.255"/>
    </reaction>
</comment>
<comment type="cofactor">
    <cofactor evidence="1">
        <name>Zn(2+)</name>
        <dbReference type="ChEBI" id="CHEBI:29105"/>
    </cofactor>
    <text evidence="1">Binds 2 Zn(2+) ions per subunit.</text>
</comment>
<comment type="similarity">
    <text evidence="2">Belongs to the zinc-containing alcohol dehydrogenase family.</text>
</comment>
<feature type="chain" id="PRO_0000160812" description="Probable mannitol dehydrogenase">
    <location>
        <begin position="1"/>
        <end position="359"/>
    </location>
</feature>
<feature type="binding site" evidence="1">
    <location>
        <position position="50"/>
    </location>
    <ligand>
        <name>Zn(2+)</name>
        <dbReference type="ChEBI" id="CHEBI:29105"/>
        <label>1</label>
        <note>catalytic</note>
    </ligand>
</feature>
<feature type="binding site" evidence="1">
    <location>
        <position position="72"/>
    </location>
    <ligand>
        <name>Zn(2+)</name>
        <dbReference type="ChEBI" id="CHEBI:29105"/>
        <label>1</label>
        <note>catalytic</note>
    </ligand>
</feature>
<feature type="binding site" evidence="1">
    <location>
        <position position="103"/>
    </location>
    <ligand>
        <name>Zn(2+)</name>
        <dbReference type="ChEBI" id="CHEBI:29105"/>
        <label>2</label>
    </ligand>
</feature>
<feature type="binding site" evidence="1">
    <location>
        <position position="106"/>
    </location>
    <ligand>
        <name>Zn(2+)</name>
        <dbReference type="ChEBI" id="CHEBI:29105"/>
        <label>2</label>
    </ligand>
</feature>
<feature type="binding site" evidence="1">
    <location>
        <position position="109"/>
    </location>
    <ligand>
        <name>Zn(2+)</name>
        <dbReference type="ChEBI" id="CHEBI:29105"/>
        <label>2</label>
    </ligand>
</feature>
<feature type="binding site" evidence="1">
    <location>
        <position position="117"/>
    </location>
    <ligand>
        <name>Zn(2+)</name>
        <dbReference type="ChEBI" id="CHEBI:29105"/>
        <label>2</label>
    </ligand>
</feature>
<feature type="binding site" evidence="1">
    <location>
        <position position="165"/>
    </location>
    <ligand>
        <name>Zn(2+)</name>
        <dbReference type="ChEBI" id="CHEBI:29105"/>
        <label>1</label>
        <note>catalytic</note>
    </ligand>
</feature>
<reference key="1">
    <citation type="journal article" date="1999" name="Plant Mol. Biol.">
        <title>Molecular characterization and expression of a wound-inducible cDNA encoding a novel cinnamyl-alcohol dehydrogenase enzyme in lucerne (Medicago sativa L.).</title>
        <authorList>
            <person name="Brill E.M."/>
            <person name="Abrahams S."/>
            <person name="Hayes C.M."/>
            <person name="Jenkins C.L."/>
            <person name="Watson J.M."/>
        </authorList>
    </citation>
    <scope>NUCLEOTIDE SEQUENCE [MRNA]</scope>
    <scope>CHARACTERIZATION</scope>
    <source>
        <strain>cv. Siriver</strain>
        <tissue>Stem</tissue>
    </source>
</reference>
<sequence>MAKSPETELPLKAFGWAARDTSGTLSPFHFSRRENGDDDVSVKILYCGVCHSDLHTLKNDWGFTTYPVVPGHEIVGVVTKVGINVKKFRVGDNVGVGVIVESCQTCENCNQDLEQYCPKPVFTYNSPYKGTRTYGGYSDFVVVHQRYVVQFPDNLPLDAGAPLLCAGITVYSPMKYYGMTEPGKHLGVAGLGGLGHVAIKFGKAFGLKVTVISTSPNKETEAIDKLGADSFLVSKDPEKMKAAMGTMDYIIDTISAAHSLMPLLGLLKLNGKLVTVGLPSKPLELSVFPLVAGRKLIGGSNIGGMKETQEMLDFCGKHNITADIELIKMHEINTAMERLHKADVKYRFVIDVANSFSSL</sequence>
<protein>
    <recommendedName>
        <fullName>Probable mannitol dehydrogenase</fullName>
        <ecNumber>1.1.1.255</ecNumber>
    </recommendedName>
    <alternativeName>
        <fullName>NAD-dependent mannitol dehydrogenase</fullName>
    </alternativeName>
</protein>
<organism>
    <name type="scientific">Medicago sativa</name>
    <name type="common">Alfalfa</name>
    <dbReference type="NCBI Taxonomy" id="3879"/>
    <lineage>
        <taxon>Eukaryota</taxon>
        <taxon>Viridiplantae</taxon>
        <taxon>Streptophyta</taxon>
        <taxon>Embryophyta</taxon>
        <taxon>Tracheophyta</taxon>
        <taxon>Spermatophyta</taxon>
        <taxon>Magnoliopsida</taxon>
        <taxon>eudicotyledons</taxon>
        <taxon>Gunneridae</taxon>
        <taxon>Pentapetalae</taxon>
        <taxon>rosids</taxon>
        <taxon>fabids</taxon>
        <taxon>Fabales</taxon>
        <taxon>Fabaceae</taxon>
        <taxon>Papilionoideae</taxon>
        <taxon>50 kb inversion clade</taxon>
        <taxon>NPAAA clade</taxon>
        <taxon>Hologalegina</taxon>
        <taxon>IRL clade</taxon>
        <taxon>Trifolieae</taxon>
        <taxon>Medicago</taxon>
    </lineage>
</organism>
<proteinExistence type="evidence at protein level"/>
<name>MTDH_MEDSA</name>
<accession>O82515</accession>